<sequence length="132" mass="15298">MRRERYLEKIEYIVEALSEIPERVKTPIEVSGVFYNLLTSIESAMDISAMLVKDLGGRVEDDYSNVEMLKELGIIDEELAEGLKKCNGLRNWLVHRYNRVDKELVLSSVEEVKALLLKFIQRVEDVLEKIEP</sequence>
<organism>
    <name type="scientific">Archaeoglobus fulgidus (strain ATCC 49558 / DSM 4304 / JCM 9628 / NBRC 100126 / VC-16)</name>
    <dbReference type="NCBI Taxonomy" id="224325"/>
    <lineage>
        <taxon>Archaea</taxon>
        <taxon>Methanobacteriati</taxon>
        <taxon>Methanobacteriota</taxon>
        <taxon>Archaeoglobi</taxon>
        <taxon>Archaeoglobales</taxon>
        <taxon>Archaeoglobaceae</taxon>
        <taxon>Archaeoglobus</taxon>
    </lineage>
</organism>
<dbReference type="EC" id="3.1.-.-" evidence="2"/>
<dbReference type="EMBL" id="AE000782">
    <property type="protein sequence ID" value="AAB91230.1"/>
    <property type="status" value="ALT_INIT"/>
    <property type="molecule type" value="Genomic_DNA"/>
</dbReference>
<dbReference type="PIR" id="B69554">
    <property type="entry name" value="B69554"/>
</dbReference>
<dbReference type="SMR" id="O30238"/>
<dbReference type="STRING" id="224325.AF_2433"/>
<dbReference type="PaxDb" id="224325-AF_2433"/>
<dbReference type="EnsemblBacteria" id="AAB91230">
    <property type="protein sequence ID" value="AAB91230"/>
    <property type="gene ID" value="AF_2433"/>
</dbReference>
<dbReference type="KEGG" id="afu:AF_2433"/>
<dbReference type="eggNOG" id="arCOG02109">
    <property type="taxonomic scope" value="Archaea"/>
</dbReference>
<dbReference type="HOGENOM" id="CLU_152343_0_0_2"/>
<dbReference type="OrthoDB" id="25331at2157"/>
<dbReference type="PhylomeDB" id="O30238"/>
<dbReference type="Proteomes" id="UP000002199">
    <property type="component" value="Chromosome"/>
</dbReference>
<dbReference type="GO" id="GO:0110001">
    <property type="term" value="C:toxin-antitoxin complex"/>
    <property type="evidence" value="ECO:0007669"/>
    <property type="project" value="InterPro"/>
</dbReference>
<dbReference type="GO" id="GO:0000166">
    <property type="term" value="F:nucleotide binding"/>
    <property type="evidence" value="ECO:0007669"/>
    <property type="project" value="UniProtKB-KW"/>
</dbReference>
<dbReference type="GO" id="GO:0004540">
    <property type="term" value="F:RNA nuclease activity"/>
    <property type="evidence" value="ECO:0007669"/>
    <property type="project" value="InterPro"/>
</dbReference>
<dbReference type="Gene3D" id="1.20.120.580">
    <property type="entry name" value="bsu32300-like"/>
    <property type="match status" value="1"/>
</dbReference>
<dbReference type="InterPro" id="IPR008201">
    <property type="entry name" value="HepT-like"/>
</dbReference>
<dbReference type="InterPro" id="IPR037038">
    <property type="entry name" value="HepT-like_sf"/>
</dbReference>
<dbReference type="InterPro" id="IPR052379">
    <property type="entry name" value="Type_VII_TA_RNase"/>
</dbReference>
<dbReference type="NCBIfam" id="NF047751">
    <property type="entry name" value="HepT_toxin"/>
    <property type="match status" value="1"/>
</dbReference>
<dbReference type="PANTHER" id="PTHR33397:SF5">
    <property type="entry name" value="RNASE YUTE-RELATED"/>
    <property type="match status" value="1"/>
</dbReference>
<dbReference type="PANTHER" id="PTHR33397">
    <property type="entry name" value="UPF0331 PROTEIN YUTE"/>
    <property type="match status" value="1"/>
</dbReference>
<dbReference type="Pfam" id="PF01934">
    <property type="entry name" value="HepT-like"/>
    <property type="match status" value="1"/>
</dbReference>
<reference key="1">
    <citation type="journal article" date="1997" name="Nature">
        <title>The complete genome sequence of the hyperthermophilic, sulphate-reducing archaeon Archaeoglobus fulgidus.</title>
        <authorList>
            <person name="Klenk H.-P."/>
            <person name="Clayton R.A."/>
            <person name="Tomb J.-F."/>
            <person name="White O."/>
            <person name="Nelson K.E."/>
            <person name="Ketchum K.A."/>
            <person name="Dodson R.J."/>
            <person name="Gwinn M.L."/>
            <person name="Hickey E.K."/>
            <person name="Peterson J.D."/>
            <person name="Richardson D.L."/>
            <person name="Kerlavage A.R."/>
            <person name="Graham D.E."/>
            <person name="Kyrpides N.C."/>
            <person name="Fleischmann R.D."/>
            <person name="Quackenbush J."/>
            <person name="Lee N.H."/>
            <person name="Sutton G.G."/>
            <person name="Gill S.R."/>
            <person name="Kirkness E.F."/>
            <person name="Dougherty B.A."/>
            <person name="McKenney K."/>
            <person name="Adams M.D."/>
            <person name="Loftus B.J."/>
            <person name="Peterson S.N."/>
            <person name="Reich C.I."/>
            <person name="McNeil L.K."/>
            <person name="Badger J.H."/>
            <person name="Glodek A."/>
            <person name="Zhou L."/>
            <person name="Overbeek R."/>
            <person name="Gocayne J.D."/>
            <person name="Weidman J.F."/>
            <person name="McDonald L.A."/>
            <person name="Utterback T.R."/>
            <person name="Cotton M.D."/>
            <person name="Spriggs T."/>
            <person name="Artiach P."/>
            <person name="Kaine B.P."/>
            <person name="Sykes S.M."/>
            <person name="Sadow P.W."/>
            <person name="D'Andrea K.P."/>
            <person name="Bowman C."/>
            <person name="Fujii C."/>
            <person name="Garland S.A."/>
            <person name="Mason T.M."/>
            <person name="Olsen G.J."/>
            <person name="Fraser C.M."/>
            <person name="Smith H.O."/>
            <person name="Woese C.R."/>
            <person name="Venter J.C."/>
        </authorList>
    </citation>
    <scope>NUCLEOTIDE SEQUENCE [LARGE SCALE GENOMIC DNA]</scope>
    <source>
        <strain>ATCC 49558 / DSM 4304 / JCM 9628 / NBRC 100126 / VC-16</strain>
    </source>
</reference>
<evidence type="ECO:0000250" key="1">
    <source>
        <dbReference type="UniProtKB" id="A0A0B0QJR1"/>
    </source>
</evidence>
<evidence type="ECO:0000250" key="2">
    <source>
        <dbReference type="UniProtKB" id="Q8ECH6"/>
    </source>
</evidence>
<evidence type="ECO:0000305" key="3"/>
<protein>
    <recommendedName>
        <fullName>Putative RNase AF_2433</fullName>
        <ecNumber evidence="2">3.1.-.-</ecNumber>
    </recommendedName>
    <alternativeName>
        <fullName>Putative toxin AF_2433</fullName>
    </alternativeName>
</protein>
<name>Y2433_ARCFU</name>
<proteinExistence type="inferred from homology"/>
<keyword id="KW-0378">Hydrolase</keyword>
<keyword id="KW-0540">Nuclease</keyword>
<keyword id="KW-0547">Nucleotide-binding</keyword>
<keyword id="KW-0597">Phosphoprotein</keyword>
<keyword id="KW-1185">Reference proteome</keyword>
<keyword id="KW-1277">Toxin-antitoxin system</keyword>
<feature type="chain" id="PRO_0000158267" description="Putative RNase AF_2433">
    <location>
        <begin position="1"/>
        <end position="132"/>
    </location>
</feature>
<feature type="short sequence motif" description="RX(4)HXY motif" evidence="1">
    <location>
        <begin position="90"/>
        <end position="97"/>
    </location>
</feature>
<feature type="active site" evidence="1">
    <location>
        <position position="90"/>
    </location>
</feature>
<feature type="active site" evidence="1">
    <location>
        <position position="95"/>
    </location>
</feature>
<feature type="modified residue" description="O-di-AMP-tyrosine" evidence="1">
    <location>
        <position position="97"/>
    </location>
</feature>
<gene>
    <name type="ordered locus">AF_2433</name>
</gene>
<accession>O30238</accession>
<comment type="function">
    <text evidence="2">Probable toxic component of a putative type VII toxin-antitoxin (TA) system, probably an RNase. Probably neutralized by cognate antitoxin AF_2432. Neutralization may be due to AMPylation by AF_2432.</text>
</comment>
<comment type="subunit">
    <text evidence="2">Homodimer, probably forms a complex with cognate antitoxin AF_2432.</text>
</comment>
<comment type="PTM">
    <text evidence="1">Modified by cognate antitoxin AF_2432; probably at least 2 successive AMPylation events occur on Tyr-97.</text>
</comment>
<comment type="similarity">
    <text evidence="3">Belongs to the HepT RNase toxin family.</text>
</comment>
<comment type="sequence caution" evidence="3">
    <conflict type="erroneous initiation">
        <sequence resource="EMBL-CDS" id="AAB91230"/>
    </conflict>
    <text>Truncated N-terminus.</text>
</comment>